<protein>
    <recommendedName>
        <fullName evidence="1">Imidazoleglycerol-phosphate dehydratase</fullName>
        <shortName evidence="1">IGPD</shortName>
        <ecNumber evidence="1">4.2.1.19</ecNumber>
    </recommendedName>
</protein>
<evidence type="ECO:0000255" key="1">
    <source>
        <dbReference type="HAMAP-Rule" id="MF_00076"/>
    </source>
</evidence>
<proteinExistence type="inferred from homology"/>
<accession>A1KV07</accession>
<organism>
    <name type="scientific">Neisseria meningitidis serogroup C / serotype 2a (strain ATCC 700532 / DSM 15464 / FAM18)</name>
    <dbReference type="NCBI Taxonomy" id="272831"/>
    <lineage>
        <taxon>Bacteria</taxon>
        <taxon>Pseudomonadati</taxon>
        <taxon>Pseudomonadota</taxon>
        <taxon>Betaproteobacteria</taxon>
        <taxon>Neisseriales</taxon>
        <taxon>Neisseriaceae</taxon>
        <taxon>Neisseria</taxon>
    </lineage>
</organism>
<gene>
    <name evidence="1" type="primary">hisB</name>
    <name type="ordered locus">NMC1503</name>
</gene>
<reference key="1">
    <citation type="journal article" date="2007" name="PLoS Genet.">
        <title>Meningococcal genetic variation mechanisms viewed through comparative analysis of serogroup C strain FAM18.</title>
        <authorList>
            <person name="Bentley S.D."/>
            <person name="Vernikos G.S."/>
            <person name="Snyder L.A.S."/>
            <person name="Churcher C."/>
            <person name="Arrowsmith C."/>
            <person name="Chillingworth T."/>
            <person name="Cronin A."/>
            <person name="Davis P.H."/>
            <person name="Holroyd N.E."/>
            <person name="Jagels K."/>
            <person name="Maddison M."/>
            <person name="Moule S."/>
            <person name="Rabbinowitsch E."/>
            <person name="Sharp S."/>
            <person name="Unwin L."/>
            <person name="Whitehead S."/>
            <person name="Quail M.A."/>
            <person name="Achtman M."/>
            <person name="Barrell B.G."/>
            <person name="Saunders N.J."/>
            <person name="Parkhill J."/>
        </authorList>
    </citation>
    <scope>NUCLEOTIDE SEQUENCE [LARGE SCALE GENOMIC DNA]</scope>
    <source>
        <strain>ATCC 700532 / DSM 15464 / FAM18</strain>
    </source>
</reference>
<comment type="catalytic activity">
    <reaction evidence="1">
        <text>D-erythro-1-(imidazol-4-yl)glycerol 3-phosphate = 3-(imidazol-4-yl)-2-oxopropyl phosphate + H2O</text>
        <dbReference type="Rhea" id="RHEA:11040"/>
        <dbReference type="ChEBI" id="CHEBI:15377"/>
        <dbReference type="ChEBI" id="CHEBI:57766"/>
        <dbReference type="ChEBI" id="CHEBI:58278"/>
        <dbReference type="EC" id="4.2.1.19"/>
    </reaction>
</comment>
<comment type="pathway">
    <text evidence="1">Amino-acid biosynthesis; L-histidine biosynthesis; L-histidine from 5-phospho-alpha-D-ribose 1-diphosphate: step 6/9.</text>
</comment>
<comment type="subcellular location">
    <subcellularLocation>
        <location evidence="1">Cytoplasm</location>
    </subcellularLocation>
</comment>
<comment type="similarity">
    <text evidence="1">Belongs to the imidazoleglycerol-phosphate dehydratase family.</text>
</comment>
<feature type="chain" id="PRO_0000336327" description="Imidazoleglycerol-phosphate dehydratase">
    <location>
        <begin position="1"/>
        <end position="305"/>
    </location>
</feature>
<dbReference type="EC" id="4.2.1.19" evidence="1"/>
<dbReference type="EMBL" id="AM421808">
    <property type="protein sequence ID" value="CAM10706.1"/>
    <property type="molecule type" value="Genomic_DNA"/>
</dbReference>
<dbReference type="SMR" id="A1KV07"/>
<dbReference type="KEGG" id="nmc:NMC1503"/>
<dbReference type="HOGENOM" id="CLU_044308_1_1_4"/>
<dbReference type="UniPathway" id="UPA00031">
    <property type="reaction ID" value="UER00011"/>
</dbReference>
<dbReference type="Proteomes" id="UP000002286">
    <property type="component" value="Chromosome"/>
</dbReference>
<dbReference type="GO" id="GO:0005737">
    <property type="term" value="C:cytoplasm"/>
    <property type="evidence" value="ECO:0007669"/>
    <property type="project" value="UniProtKB-SubCell"/>
</dbReference>
<dbReference type="GO" id="GO:0004424">
    <property type="term" value="F:imidazoleglycerol-phosphate dehydratase activity"/>
    <property type="evidence" value="ECO:0007669"/>
    <property type="project" value="UniProtKB-UniRule"/>
</dbReference>
<dbReference type="GO" id="GO:0000105">
    <property type="term" value="P:L-histidine biosynthetic process"/>
    <property type="evidence" value="ECO:0007669"/>
    <property type="project" value="UniProtKB-UniRule"/>
</dbReference>
<dbReference type="CDD" id="cd07914">
    <property type="entry name" value="IGPD"/>
    <property type="match status" value="1"/>
</dbReference>
<dbReference type="FunFam" id="3.30.230.40:FF:000002">
    <property type="entry name" value="Imidazoleglycerol-phosphate dehydratase"/>
    <property type="match status" value="1"/>
</dbReference>
<dbReference type="FunFam" id="3.30.230.40:FF:000003">
    <property type="entry name" value="Imidazoleglycerol-phosphate dehydratase HisB"/>
    <property type="match status" value="1"/>
</dbReference>
<dbReference type="Gene3D" id="3.30.230.40">
    <property type="entry name" value="Imidazole glycerol phosphate dehydratase, domain 1"/>
    <property type="match status" value="2"/>
</dbReference>
<dbReference type="HAMAP" id="MF_00076">
    <property type="entry name" value="HisB"/>
    <property type="match status" value="1"/>
</dbReference>
<dbReference type="InterPro" id="IPR038494">
    <property type="entry name" value="IGPD_sf"/>
</dbReference>
<dbReference type="InterPro" id="IPR000807">
    <property type="entry name" value="ImidazoleglycerolP_deHydtase"/>
</dbReference>
<dbReference type="InterPro" id="IPR020565">
    <property type="entry name" value="ImidazoleglycerP_deHydtase_CS"/>
</dbReference>
<dbReference type="InterPro" id="IPR020568">
    <property type="entry name" value="Ribosomal_Su5_D2-typ_SF"/>
</dbReference>
<dbReference type="NCBIfam" id="NF002106">
    <property type="entry name" value="PRK00951.1-1"/>
    <property type="match status" value="1"/>
</dbReference>
<dbReference type="NCBIfam" id="NF002109">
    <property type="entry name" value="PRK00951.1-5"/>
    <property type="match status" value="1"/>
</dbReference>
<dbReference type="NCBIfam" id="NF002111">
    <property type="entry name" value="PRK00951.2-1"/>
    <property type="match status" value="1"/>
</dbReference>
<dbReference type="NCBIfam" id="NF002114">
    <property type="entry name" value="PRK00951.2-4"/>
    <property type="match status" value="1"/>
</dbReference>
<dbReference type="PANTHER" id="PTHR23133:SF2">
    <property type="entry name" value="IMIDAZOLEGLYCEROL-PHOSPHATE DEHYDRATASE"/>
    <property type="match status" value="1"/>
</dbReference>
<dbReference type="PANTHER" id="PTHR23133">
    <property type="entry name" value="IMIDAZOLEGLYCEROL-PHOSPHATE DEHYDRATASE HIS7"/>
    <property type="match status" value="1"/>
</dbReference>
<dbReference type="Pfam" id="PF00475">
    <property type="entry name" value="IGPD"/>
    <property type="match status" value="1"/>
</dbReference>
<dbReference type="SUPFAM" id="SSF54211">
    <property type="entry name" value="Ribosomal protein S5 domain 2-like"/>
    <property type="match status" value="2"/>
</dbReference>
<dbReference type="PROSITE" id="PS00954">
    <property type="entry name" value="IGP_DEHYDRATASE_1"/>
    <property type="match status" value="1"/>
</dbReference>
<dbReference type="PROSITE" id="PS00955">
    <property type="entry name" value="IGP_DEHYDRATASE_2"/>
    <property type="match status" value="1"/>
</dbReference>
<sequence>MNLTKTQRQLHNFLTLAQEAGSLSKLAKLCGYRTPVALYKLKQRLEKQAEDPDARGIRPSLMAKLEKHTGKPKGWLDRKHRERTVPETAAESTGTAETQIAETASAAGCRSVTVNRNTCETQITVSINLDGSGKSRLDTGVPFLEHMIDQIARHGMIDIDISCKGDLHIDDHHTAEDIGITLGQAIRQALGDKKGIRRYGHSYVPLDEALSRVVIDLSGRPGLVYNIEFTRALIGRFDVDLFEEFFHGIVNHSMMTLHIDNLSGKNAHHQAETVFKAFGRALRMAVEHDPRMAGQTPSTKGTLTA</sequence>
<keyword id="KW-0028">Amino-acid biosynthesis</keyword>
<keyword id="KW-0963">Cytoplasm</keyword>
<keyword id="KW-0368">Histidine biosynthesis</keyword>
<keyword id="KW-0456">Lyase</keyword>
<name>HIS7_NEIMF</name>